<geneLocation type="mitochondrion"/>
<evidence type="ECO:0000250" key="1">
    <source>
        <dbReference type="UniProtKB" id="P00403"/>
    </source>
</evidence>
<evidence type="ECO:0000250" key="2">
    <source>
        <dbReference type="UniProtKB" id="P00410"/>
    </source>
</evidence>
<evidence type="ECO:0000250" key="3">
    <source>
        <dbReference type="UniProtKB" id="P68530"/>
    </source>
</evidence>
<evidence type="ECO:0000305" key="4"/>
<keyword id="KW-0186">Copper</keyword>
<keyword id="KW-0249">Electron transport</keyword>
<keyword id="KW-0460">Magnesium</keyword>
<keyword id="KW-0472">Membrane</keyword>
<keyword id="KW-0479">Metal-binding</keyword>
<keyword id="KW-0496">Mitochondrion</keyword>
<keyword id="KW-0999">Mitochondrion inner membrane</keyword>
<keyword id="KW-0679">Respiratory chain</keyword>
<keyword id="KW-1278">Translocase</keyword>
<keyword id="KW-0812">Transmembrane</keyword>
<keyword id="KW-1133">Transmembrane helix</keyword>
<keyword id="KW-0813">Transport</keyword>
<reference key="1">
    <citation type="journal article" date="2005" name="Mol. Phylogenet. Evol.">
        <title>Multigene phylogeny of the Old World mice, Murinae, reveals distinct geographic lineages and the declining utility of mitochondrial genes compared to nuclear genes.</title>
        <authorList>
            <person name="Steppan S.J."/>
            <person name="Adkins R.M."/>
            <person name="Spinks P.Q."/>
            <person name="Hale C."/>
        </authorList>
    </citation>
    <scope>NUCLEOTIDE SEQUENCE [GENOMIC DNA]</scope>
</reference>
<organism>
    <name type="scientific">Batomys granti</name>
    <name type="common">Luzon hairy-tailed rat</name>
    <name type="synonym">Luzon forest rat</name>
    <dbReference type="NCBI Taxonomy" id="234628"/>
    <lineage>
        <taxon>Eukaryota</taxon>
        <taxon>Metazoa</taxon>
        <taxon>Chordata</taxon>
        <taxon>Craniata</taxon>
        <taxon>Vertebrata</taxon>
        <taxon>Euteleostomi</taxon>
        <taxon>Mammalia</taxon>
        <taxon>Eutheria</taxon>
        <taxon>Euarchontoglires</taxon>
        <taxon>Glires</taxon>
        <taxon>Rodentia</taxon>
        <taxon>Myomorpha</taxon>
        <taxon>Muroidea</taxon>
        <taxon>Muridae</taxon>
        <taxon>Murinae</taxon>
        <taxon>Batomys</taxon>
    </lineage>
</organism>
<accession>Q38S23</accession>
<comment type="function">
    <text evidence="2">Component of the cytochrome c oxidase, the last enzyme in the mitochondrial electron transport chain which drives oxidative phosphorylation. The respiratory chain contains 3 multisubunit complexes succinate dehydrogenase (complex II, CII), ubiquinol-cytochrome c oxidoreductase (cytochrome b-c1 complex, complex III, CIII) and cytochrome c oxidase (complex IV, CIV), that cooperate to transfer electrons derived from NADH and succinate to molecular oxygen, creating an electrochemical gradient over the inner membrane that drives transmembrane transport and the ATP synthase. Cytochrome c oxidase is the component of the respiratory chain that catalyzes the reduction of oxygen to water. Electrons originating from reduced cytochrome c in the intermembrane space (IMS) are transferred via the dinuclear copper A center (CU(A)) of subunit 2 and heme A of subunit 1 to the active site in subunit 1, a binuclear center (BNC) formed by heme A3 and copper B (CU(B)). The BNC reduces molecular oxygen to 2 water molecules using 4 electrons from cytochrome c in the IMS and 4 protons from the mitochondrial matrix.</text>
</comment>
<comment type="catalytic activity">
    <reaction evidence="2">
        <text>4 Fe(II)-[cytochrome c] + O2 + 8 H(+)(in) = 4 Fe(III)-[cytochrome c] + 2 H2O + 4 H(+)(out)</text>
        <dbReference type="Rhea" id="RHEA:11436"/>
        <dbReference type="Rhea" id="RHEA-COMP:10350"/>
        <dbReference type="Rhea" id="RHEA-COMP:14399"/>
        <dbReference type="ChEBI" id="CHEBI:15377"/>
        <dbReference type="ChEBI" id="CHEBI:15378"/>
        <dbReference type="ChEBI" id="CHEBI:15379"/>
        <dbReference type="ChEBI" id="CHEBI:29033"/>
        <dbReference type="ChEBI" id="CHEBI:29034"/>
        <dbReference type="EC" id="7.1.1.9"/>
    </reaction>
    <physiologicalReaction direction="left-to-right" evidence="2">
        <dbReference type="Rhea" id="RHEA:11437"/>
    </physiologicalReaction>
</comment>
<comment type="cofactor">
    <cofactor evidence="3">
        <name>Cu cation</name>
        <dbReference type="ChEBI" id="CHEBI:23378"/>
    </cofactor>
    <text evidence="3">Binds a dinuclear copper A center per subunit.</text>
</comment>
<comment type="subunit">
    <text evidence="1 3">Component of the cytochrome c oxidase (complex IV, CIV), a multisubunit enzyme composed of 14 subunits. The complex is composed of a catalytic core of 3 subunits MT-CO1, MT-CO2 and MT-CO3, encoded in the mitochondrial DNA, and 11 supernumerary subunits COX4I, COX5A, COX5B, COX6A, COX6B, COX6C, COX7A, COX7B, COX7C, COX8 and NDUFA4, which are encoded in the nuclear genome. The complex exists as a monomer or a dimer and forms supercomplexes (SCs) in the inner mitochondrial membrane with NADH-ubiquinone oxidoreductase (complex I, CI) and ubiquinol-cytochrome c oxidoreductase (cytochrome b-c1 complex, complex III, CIII), resulting in different assemblies (supercomplex SCI(1)III(2)IV(1) and megacomplex MCI(2)III(2)IV(2)) (By similarity). Found in a complex with TMEM177, COA6, COX18, COX20, SCO1 and SCO2. Interacts with TMEM177 in a COX20-dependent manner. Interacts with COX20. Interacts with COX16 (By similarity).</text>
</comment>
<comment type="subcellular location">
    <subcellularLocation>
        <location evidence="3">Mitochondrion inner membrane</location>
        <topology evidence="3">Multi-pass membrane protein</topology>
    </subcellularLocation>
</comment>
<comment type="similarity">
    <text evidence="4">Belongs to the cytochrome c oxidase subunit 2 family.</text>
</comment>
<feature type="chain" id="PRO_0000254916" description="Cytochrome c oxidase subunit 2">
    <location>
        <begin position="1"/>
        <end position="227"/>
    </location>
</feature>
<feature type="topological domain" description="Mitochondrial intermembrane" evidence="3">
    <location>
        <begin position="1"/>
        <end position="14"/>
    </location>
</feature>
<feature type="transmembrane region" description="Helical; Name=I" evidence="3">
    <location>
        <begin position="15"/>
        <end position="45"/>
    </location>
</feature>
<feature type="topological domain" description="Mitochondrial matrix" evidence="3">
    <location>
        <begin position="46"/>
        <end position="59"/>
    </location>
</feature>
<feature type="transmembrane region" description="Helical; Name=II" evidence="3">
    <location>
        <begin position="60"/>
        <end position="87"/>
    </location>
</feature>
<feature type="topological domain" description="Mitochondrial intermembrane" evidence="3">
    <location>
        <begin position="88"/>
        <end position="227"/>
    </location>
</feature>
<feature type="binding site" evidence="3">
    <location>
        <position position="161"/>
    </location>
    <ligand>
        <name>Cu cation</name>
        <dbReference type="ChEBI" id="CHEBI:23378"/>
        <label>A1</label>
    </ligand>
</feature>
<feature type="binding site" evidence="3">
    <location>
        <position position="196"/>
    </location>
    <ligand>
        <name>Cu cation</name>
        <dbReference type="ChEBI" id="CHEBI:23378"/>
        <label>A1</label>
    </ligand>
</feature>
<feature type="binding site" evidence="3">
    <location>
        <position position="196"/>
    </location>
    <ligand>
        <name>Cu cation</name>
        <dbReference type="ChEBI" id="CHEBI:23378"/>
        <label>A2</label>
    </ligand>
</feature>
<feature type="binding site" evidence="3">
    <location>
        <position position="198"/>
    </location>
    <ligand>
        <name>Cu cation</name>
        <dbReference type="ChEBI" id="CHEBI:23378"/>
        <label>A2</label>
    </ligand>
</feature>
<feature type="binding site" evidence="3">
    <location>
        <position position="198"/>
    </location>
    <ligand>
        <name>Mg(2+)</name>
        <dbReference type="ChEBI" id="CHEBI:18420"/>
        <note>ligand shared with MT-CO1</note>
    </ligand>
</feature>
<feature type="binding site" evidence="3">
    <location>
        <position position="200"/>
    </location>
    <ligand>
        <name>Cu cation</name>
        <dbReference type="ChEBI" id="CHEBI:23378"/>
        <label>A1</label>
    </ligand>
</feature>
<feature type="binding site" evidence="3">
    <location>
        <position position="200"/>
    </location>
    <ligand>
        <name>Cu cation</name>
        <dbReference type="ChEBI" id="CHEBI:23378"/>
        <label>A2</label>
    </ligand>
</feature>
<feature type="binding site" evidence="3">
    <location>
        <position position="204"/>
    </location>
    <ligand>
        <name>Cu cation</name>
        <dbReference type="ChEBI" id="CHEBI:23378"/>
        <label>A2</label>
    </ligand>
</feature>
<feature type="binding site" evidence="3">
    <location>
        <position position="207"/>
    </location>
    <ligand>
        <name>Cu cation</name>
        <dbReference type="ChEBI" id="CHEBI:23378"/>
        <label>A1</label>
    </ligand>
</feature>
<dbReference type="EC" id="7.1.1.9"/>
<dbReference type="EMBL" id="DQ019095">
    <property type="protein sequence ID" value="ABA28377.1"/>
    <property type="molecule type" value="Genomic_DNA"/>
</dbReference>
<dbReference type="SMR" id="Q38S23"/>
<dbReference type="GO" id="GO:0005743">
    <property type="term" value="C:mitochondrial inner membrane"/>
    <property type="evidence" value="ECO:0007669"/>
    <property type="project" value="UniProtKB-SubCell"/>
</dbReference>
<dbReference type="GO" id="GO:0045277">
    <property type="term" value="C:respiratory chain complex IV"/>
    <property type="evidence" value="ECO:0000250"/>
    <property type="project" value="UniProtKB"/>
</dbReference>
<dbReference type="GO" id="GO:0005507">
    <property type="term" value="F:copper ion binding"/>
    <property type="evidence" value="ECO:0007669"/>
    <property type="project" value="InterPro"/>
</dbReference>
<dbReference type="GO" id="GO:0004129">
    <property type="term" value="F:cytochrome-c oxidase activity"/>
    <property type="evidence" value="ECO:0007669"/>
    <property type="project" value="UniProtKB-EC"/>
</dbReference>
<dbReference type="GO" id="GO:0042773">
    <property type="term" value="P:ATP synthesis coupled electron transport"/>
    <property type="evidence" value="ECO:0007669"/>
    <property type="project" value="TreeGrafter"/>
</dbReference>
<dbReference type="CDD" id="cd13912">
    <property type="entry name" value="CcO_II_C"/>
    <property type="match status" value="1"/>
</dbReference>
<dbReference type="FunFam" id="1.10.287.90:FF:000001">
    <property type="entry name" value="Cytochrome c oxidase subunit 2"/>
    <property type="match status" value="1"/>
</dbReference>
<dbReference type="FunFam" id="2.60.40.420:FF:000001">
    <property type="entry name" value="Cytochrome c oxidase subunit 2"/>
    <property type="match status" value="1"/>
</dbReference>
<dbReference type="Gene3D" id="1.10.287.90">
    <property type="match status" value="1"/>
</dbReference>
<dbReference type="Gene3D" id="2.60.40.420">
    <property type="entry name" value="Cupredoxins - blue copper proteins"/>
    <property type="match status" value="1"/>
</dbReference>
<dbReference type="InterPro" id="IPR045187">
    <property type="entry name" value="CcO_II"/>
</dbReference>
<dbReference type="InterPro" id="IPR002429">
    <property type="entry name" value="CcO_II-like_C"/>
</dbReference>
<dbReference type="InterPro" id="IPR034210">
    <property type="entry name" value="CcO_II_C"/>
</dbReference>
<dbReference type="InterPro" id="IPR001505">
    <property type="entry name" value="Copper_CuA"/>
</dbReference>
<dbReference type="InterPro" id="IPR008972">
    <property type="entry name" value="Cupredoxin"/>
</dbReference>
<dbReference type="InterPro" id="IPR014222">
    <property type="entry name" value="Cyt_c_oxidase_su2"/>
</dbReference>
<dbReference type="InterPro" id="IPR011759">
    <property type="entry name" value="Cyt_c_oxidase_su2_TM_dom"/>
</dbReference>
<dbReference type="InterPro" id="IPR036257">
    <property type="entry name" value="Cyt_c_oxidase_su2_TM_sf"/>
</dbReference>
<dbReference type="NCBIfam" id="TIGR02866">
    <property type="entry name" value="CoxB"/>
    <property type="match status" value="1"/>
</dbReference>
<dbReference type="PANTHER" id="PTHR22888:SF9">
    <property type="entry name" value="CYTOCHROME C OXIDASE SUBUNIT 2"/>
    <property type="match status" value="1"/>
</dbReference>
<dbReference type="PANTHER" id="PTHR22888">
    <property type="entry name" value="CYTOCHROME C OXIDASE, SUBUNIT II"/>
    <property type="match status" value="1"/>
</dbReference>
<dbReference type="Pfam" id="PF00116">
    <property type="entry name" value="COX2"/>
    <property type="match status" value="1"/>
</dbReference>
<dbReference type="Pfam" id="PF02790">
    <property type="entry name" value="COX2_TM"/>
    <property type="match status" value="1"/>
</dbReference>
<dbReference type="PRINTS" id="PR01166">
    <property type="entry name" value="CYCOXIDASEII"/>
</dbReference>
<dbReference type="SUPFAM" id="SSF49503">
    <property type="entry name" value="Cupredoxins"/>
    <property type="match status" value="1"/>
</dbReference>
<dbReference type="SUPFAM" id="SSF81464">
    <property type="entry name" value="Cytochrome c oxidase subunit II-like, transmembrane region"/>
    <property type="match status" value="1"/>
</dbReference>
<dbReference type="PROSITE" id="PS00078">
    <property type="entry name" value="COX2"/>
    <property type="match status" value="1"/>
</dbReference>
<dbReference type="PROSITE" id="PS50857">
    <property type="entry name" value="COX2_CUA"/>
    <property type="match status" value="1"/>
</dbReference>
<dbReference type="PROSITE" id="PS50999">
    <property type="entry name" value="COX2_TM"/>
    <property type="match status" value="1"/>
</dbReference>
<gene>
    <name type="primary">MT-CO2</name>
    <name type="synonym">COII</name>
    <name type="synonym">COX2</name>
    <name type="synonym">COXII</name>
    <name type="synonym">MTCO2</name>
</gene>
<sequence length="227" mass="25903">MAYPFQLGLQDATSPIMEELTNFHDHTLMIVFLISSLVLYIISLMLTTKLTHTSTMDAQEVETIWTILPAVILILIALPSLRILYMMDEINNPVLTVKTMGHQWYWSYEYTDYEDLCFDSYMIPTTDLKPGELRLLEVDNRVVLPMELPIRMLISSEDVLHSWAVPSLGLKTDAIPGRLNQATLTSNRPGLFYGQCSEICGSNHSFMPIVLEMVPLKHFENWSASMI</sequence>
<protein>
    <recommendedName>
        <fullName>Cytochrome c oxidase subunit 2</fullName>
        <ecNumber>7.1.1.9</ecNumber>
    </recommendedName>
    <alternativeName>
        <fullName>Cytochrome c oxidase polypeptide II</fullName>
    </alternativeName>
</protein>
<proteinExistence type="inferred from homology"/>
<name>COX2_BATGR</name>